<keyword id="KW-1003">Cell membrane</keyword>
<keyword id="KW-1015">Disulfide bond</keyword>
<keyword id="KW-0325">Glycoprotein</keyword>
<keyword id="KW-0393">Immunoglobulin domain</keyword>
<keyword id="KW-0472">Membrane</keyword>
<keyword id="KW-1267">Proteomics identification</keyword>
<keyword id="KW-0675">Receptor</keyword>
<keyword id="KW-1185">Reference proteome</keyword>
<keyword id="KW-0732">Signal</keyword>
<keyword id="KW-0812">Transmembrane</keyword>
<keyword id="KW-1133">Transmembrane helix</keyword>
<accession>Q5T2D2</accession>
<accession>Q08AP8</accession>
<accession>Q08AP9</accession>
<accession>Q8IWY0</accession>
<accession>Q9H8E9</accession>
<organism>
    <name type="scientific">Homo sapiens</name>
    <name type="common">Human</name>
    <dbReference type="NCBI Taxonomy" id="9606"/>
    <lineage>
        <taxon>Eukaryota</taxon>
        <taxon>Metazoa</taxon>
        <taxon>Chordata</taxon>
        <taxon>Craniata</taxon>
        <taxon>Vertebrata</taxon>
        <taxon>Euteleostomi</taxon>
        <taxon>Mammalia</taxon>
        <taxon>Eutheria</taxon>
        <taxon>Euarchontoglires</taxon>
        <taxon>Primates</taxon>
        <taxon>Haplorrhini</taxon>
        <taxon>Catarrhini</taxon>
        <taxon>Hominidae</taxon>
        <taxon>Homo</taxon>
    </lineage>
</organism>
<sequence length="321" mass="35127">MAPAFLLLLLLWPQGCVSGPSADSVYTKVRLLEGETLSVQCSYKGYKNRVEGKVWCKIRKKKCEPGFARVWVKGPRYLLQDDAQAKVVNITMVALKLQDSGRYWCMRNTSGILYPLMGFQLDVSPAPQTERNIPFTHLDNILKSGTVTTGQAPTSGPDAPFTTGVMVFTPGLITLPRLLASTRPASKTGYSFTATSTTSQGPRRTMGSQTVTASPSNARDSSAGPESISTKSGDLSTRSPTTGLCLTSRSLLNRLPSMPSIRHQDVYSTVLGVVLTLLVLMLIMVYGFWKKRHMASYSMCSDPSTRDPPGRPEPYVEVYLI</sequence>
<comment type="function">
    <text evidence="5 7">Cell surface receptor that may play a role in the innate and adaptive immune response. Acts as a counter-receptor for CD276 and interaction with CD276 on T-cells enhances T-cell activation.</text>
</comment>
<comment type="subunit">
    <text evidence="7">Interacts with CD276 and this interaction enhances T-cell activation.</text>
</comment>
<comment type="subcellular location">
    <subcellularLocation>
        <location evidence="1">Cell membrane</location>
        <topology evidence="1">Single-pass type I membrane protein</topology>
    </subcellularLocation>
</comment>
<comment type="tissue specificity">
    <text evidence="5 7">Detected in cultured B-cells, T-cell leukemia and monocyte leukemia. Expressed constitutively on CD8 T-cells and induced on CD4 T-cells after activation.</text>
</comment>
<comment type="induction">
    <text evidence="7">Induced in CD4 T-cells by concanavalin-A.</text>
</comment>
<comment type="sequence caution" evidence="8">
    <conflict type="erroneous initiation">
        <sequence resource="EMBL-CDS" id="AAI25079"/>
    </conflict>
</comment>
<comment type="sequence caution" evidence="8">
    <conflict type="erroneous initiation">
        <sequence resource="EMBL-CDS" id="AAI25080"/>
    </conflict>
</comment>
<comment type="sequence caution" evidence="8">
    <conflict type="erroneous initiation">
        <sequence resource="EMBL-CDS" id="BAB14668"/>
    </conflict>
</comment>
<name>TRML2_HUMAN</name>
<feature type="signal peptide" evidence="2">
    <location>
        <begin position="1"/>
        <end position="18"/>
    </location>
</feature>
<feature type="chain" id="PRO_0000253857" description="Trem-like transcript 2 protein">
    <location>
        <begin position="19"/>
        <end position="321"/>
    </location>
</feature>
<feature type="topological domain" description="Extracellular" evidence="2">
    <location>
        <begin position="19"/>
        <end position="268"/>
    </location>
</feature>
<feature type="transmembrane region" description="Helical" evidence="2">
    <location>
        <begin position="269"/>
        <end position="289"/>
    </location>
</feature>
<feature type="topological domain" description="Cytoplasmic" evidence="2">
    <location>
        <begin position="290"/>
        <end position="321"/>
    </location>
</feature>
<feature type="domain" description="Ig-like V-type">
    <location>
        <begin position="20"/>
        <end position="121"/>
    </location>
</feature>
<feature type="region of interest" description="Disordered" evidence="4">
    <location>
        <begin position="189"/>
        <end position="241"/>
    </location>
</feature>
<feature type="compositionally biased region" description="Polar residues" evidence="4">
    <location>
        <begin position="189"/>
        <end position="220"/>
    </location>
</feature>
<feature type="compositionally biased region" description="Polar residues" evidence="4">
    <location>
        <begin position="227"/>
        <end position="241"/>
    </location>
</feature>
<feature type="glycosylation site" description="N-linked (GlcNAc...) asparagine" evidence="2">
    <location>
        <position position="89"/>
    </location>
</feature>
<feature type="disulfide bond" evidence="3">
    <location>
        <begin position="41"/>
        <end position="105"/>
    </location>
</feature>
<feature type="disulfide bond" evidence="3">
    <location>
        <begin position="56"/>
        <end position="63"/>
    </location>
</feature>
<feature type="sequence variant" id="VAR_059412" description="In dbSNP:rs4418164.">
    <original>G</original>
    <variation>C</variation>
    <location>
        <position position="19"/>
    </location>
</feature>
<feature type="sequence variant" id="VAR_055418" description="In dbSNP:rs35512890.">
    <original>V</original>
    <variation>M</variation>
    <location>
        <position position="50"/>
    </location>
</feature>
<feature type="sequence variant" id="VAR_055419" description="In dbSNP:rs3747742." evidence="6">
    <original>S</original>
    <variation>G</variation>
    <location>
        <position position="144"/>
    </location>
</feature>
<feature type="sequence variant" id="VAR_055420" description="In dbSNP:rs35521209.">
    <original>V</original>
    <variation>I</variation>
    <location>
        <position position="285"/>
    </location>
</feature>
<feature type="sequence conflict" description="In Ref. 5; AAI25080." evidence="8" ref="5">
    <original>D</original>
    <variation>G</variation>
    <location>
        <position position="23"/>
    </location>
</feature>
<feature type="sequence conflict" description="In Ref. 5; AAI25080." evidence="8" ref="5">
    <original>V</original>
    <variation>A</variation>
    <location>
        <position position="25"/>
    </location>
</feature>
<feature type="sequence conflict" description="In Ref. 3; BAB14668." evidence="8" ref="3">
    <original>R</original>
    <variation>K</variation>
    <location>
        <position position="59"/>
    </location>
</feature>
<feature type="sequence conflict" description="In Ref. 5; AAI25079." evidence="8" ref="5">
    <original>T</original>
    <variation>S</variation>
    <location>
        <position position="129"/>
    </location>
</feature>
<gene>
    <name type="primary">TREML2</name>
    <name type="synonym">C6orf76</name>
    <name type="synonym">TLT2</name>
    <name type="ORF">UNQ6268/PRO20473</name>
</gene>
<dbReference type="EMBL" id="AF534824">
    <property type="protein sequence ID" value="AAO15022.1"/>
    <property type="molecule type" value="mRNA"/>
</dbReference>
<dbReference type="EMBL" id="AY358171">
    <property type="protein sequence ID" value="AAQ88538.1"/>
    <property type="molecule type" value="mRNA"/>
</dbReference>
<dbReference type="EMBL" id="AK023755">
    <property type="protein sequence ID" value="BAB14668.1"/>
    <property type="status" value="ALT_INIT"/>
    <property type="molecule type" value="mRNA"/>
</dbReference>
<dbReference type="EMBL" id="AL133404">
    <property type="status" value="NOT_ANNOTATED_CDS"/>
    <property type="molecule type" value="Genomic_DNA"/>
</dbReference>
<dbReference type="EMBL" id="AL391903">
    <property type="status" value="NOT_ANNOTATED_CDS"/>
    <property type="molecule type" value="Genomic_DNA"/>
</dbReference>
<dbReference type="EMBL" id="BC125078">
    <property type="protein sequence ID" value="AAI25079.1"/>
    <property type="status" value="ALT_INIT"/>
    <property type="molecule type" value="mRNA"/>
</dbReference>
<dbReference type="EMBL" id="BC125079">
    <property type="protein sequence ID" value="AAI25080.1"/>
    <property type="status" value="ALT_INIT"/>
    <property type="molecule type" value="mRNA"/>
</dbReference>
<dbReference type="CCDS" id="CCDS4853.2"/>
<dbReference type="RefSeq" id="NP_079083.2">
    <property type="nucleotide sequence ID" value="NM_024807.4"/>
</dbReference>
<dbReference type="SMR" id="Q5T2D2"/>
<dbReference type="BioGRID" id="122953">
    <property type="interactions" value="29"/>
</dbReference>
<dbReference type="FunCoup" id="Q5T2D2">
    <property type="interactions" value="89"/>
</dbReference>
<dbReference type="IntAct" id="Q5T2D2">
    <property type="interactions" value="22"/>
</dbReference>
<dbReference type="STRING" id="9606.ENSP00000418767"/>
<dbReference type="GlyConnect" id="1980">
    <property type="glycosylation" value="13 N-Linked glycans (1 site)"/>
</dbReference>
<dbReference type="GlyCosmos" id="Q5T2D2">
    <property type="glycosylation" value="1 site, 13 glycans"/>
</dbReference>
<dbReference type="GlyGen" id="Q5T2D2">
    <property type="glycosylation" value="1 site, 13 N-linked glycans (1 site)"/>
</dbReference>
<dbReference type="iPTMnet" id="Q5T2D2"/>
<dbReference type="PhosphoSitePlus" id="Q5T2D2"/>
<dbReference type="BioMuta" id="TREML2"/>
<dbReference type="DMDM" id="116256100"/>
<dbReference type="MassIVE" id="Q5T2D2"/>
<dbReference type="PaxDb" id="9606-ENSP00000418767"/>
<dbReference type="PeptideAtlas" id="Q5T2D2"/>
<dbReference type="ProteomicsDB" id="64330"/>
<dbReference type="Antibodypedia" id="30035">
    <property type="antibodies" value="164 antibodies from 26 providers"/>
</dbReference>
<dbReference type="DNASU" id="79865"/>
<dbReference type="Ensembl" id="ENST00000483722.2">
    <property type="protein sequence ID" value="ENSP00000418767.1"/>
    <property type="gene ID" value="ENSG00000112195.9"/>
</dbReference>
<dbReference type="GeneID" id="79865"/>
<dbReference type="KEGG" id="hsa:79865"/>
<dbReference type="MANE-Select" id="ENST00000483722.2">
    <property type="protein sequence ID" value="ENSP00000418767.1"/>
    <property type="RefSeq nucleotide sequence ID" value="NM_024807.4"/>
    <property type="RefSeq protein sequence ID" value="NP_079083.2"/>
</dbReference>
<dbReference type="UCSC" id="uc010jxm.3">
    <property type="organism name" value="human"/>
</dbReference>
<dbReference type="AGR" id="HGNC:21092"/>
<dbReference type="CTD" id="79865"/>
<dbReference type="DisGeNET" id="79865"/>
<dbReference type="GeneCards" id="TREML2"/>
<dbReference type="HGNC" id="HGNC:21092">
    <property type="gene designation" value="TREML2"/>
</dbReference>
<dbReference type="HPA" id="ENSG00000112195">
    <property type="expression patterns" value="Tissue enhanced (bone marrow, lymphoid tissue)"/>
</dbReference>
<dbReference type="MIM" id="609715">
    <property type="type" value="gene"/>
</dbReference>
<dbReference type="neXtProt" id="NX_Q5T2D2"/>
<dbReference type="NIAGADS" id="ENSG00000112195"/>
<dbReference type="OpenTargets" id="ENSG00000112195"/>
<dbReference type="PharmGKB" id="PA134921444"/>
<dbReference type="VEuPathDB" id="HostDB:ENSG00000112195"/>
<dbReference type="eggNOG" id="ENOG502SPIC">
    <property type="taxonomic scope" value="Eukaryota"/>
</dbReference>
<dbReference type="GeneTree" id="ENSGT00940000153835"/>
<dbReference type="HOGENOM" id="CLU_044854_0_0_1"/>
<dbReference type="InParanoid" id="Q5T2D2"/>
<dbReference type="OMA" id="YPLMGFQ"/>
<dbReference type="OrthoDB" id="8920197at2759"/>
<dbReference type="PAN-GO" id="Q5T2D2">
    <property type="GO annotations" value="3 GO annotations based on evolutionary models"/>
</dbReference>
<dbReference type="PhylomeDB" id="Q5T2D2"/>
<dbReference type="TreeFam" id="TF337556"/>
<dbReference type="PathwayCommons" id="Q5T2D2"/>
<dbReference type="Reactome" id="R-HSA-198933">
    <property type="pathway name" value="Immunoregulatory interactions between a Lymphoid and a non-Lymphoid cell"/>
</dbReference>
<dbReference type="SignaLink" id="Q5T2D2"/>
<dbReference type="BioGRID-ORCS" id="79865">
    <property type="hits" value="59 hits in 1152 CRISPR screens"/>
</dbReference>
<dbReference type="GenomeRNAi" id="79865"/>
<dbReference type="Pharos" id="Q5T2D2">
    <property type="development level" value="Tbio"/>
</dbReference>
<dbReference type="PRO" id="PR:Q5T2D2"/>
<dbReference type="Proteomes" id="UP000005640">
    <property type="component" value="Chromosome 6"/>
</dbReference>
<dbReference type="RNAct" id="Q5T2D2">
    <property type="molecule type" value="protein"/>
</dbReference>
<dbReference type="Bgee" id="ENSG00000112195">
    <property type="expression patterns" value="Expressed in blood and 82 other cell types or tissues"/>
</dbReference>
<dbReference type="GO" id="GO:0009986">
    <property type="term" value="C:cell surface"/>
    <property type="evidence" value="ECO:0000314"/>
    <property type="project" value="UniProtKB"/>
</dbReference>
<dbReference type="GO" id="GO:0005886">
    <property type="term" value="C:plasma membrane"/>
    <property type="evidence" value="ECO:0000304"/>
    <property type="project" value="Reactome"/>
</dbReference>
<dbReference type="GO" id="GO:0038023">
    <property type="term" value="F:signaling receptor activity"/>
    <property type="evidence" value="ECO:0000314"/>
    <property type="project" value="UniProtKB"/>
</dbReference>
<dbReference type="GO" id="GO:0042110">
    <property type="term" value="P:T cell activation"/>
    <property type="evidence" value="ECO:0000314"/>
    <property type="project" value="UniProtKB"/>
</dbReference>
<dbReference type="CDD" id="cd05716">
    <property type="entry name" value="IgV_pIgR_like"/>
    <property type="match status" value="1"/>
</dbReference>
<dbReference type="FunFam" id="2.60.40.10:FF:001672">
    <property type="entry name" value="Triggering receptor expressed on myeloid cells like 2"/>
    <property type="match status" value="1"/>
</dbReference>
<dbReference type="Gene3D" id="2.60.40.10">
    <property type="entry name" value="Immunoglobulins"/>
    <property type="match status" value="1"/>
</dbReference>
<dbReference type="InterPro" id="IPR007110">
    <property type="entry name" value="Ig-like_dom"/>
</dbReference>
<dbReference type="InterPro" id="IPR036179">
    <property type="entry name" value="Ig-like_dom_sf"/>
</dbReference>
<dbReference type="InterPro" id="IPR013783">
    <property type="entry name" value="Ig-like_fold"/>
</dbReference>
<dbReference type="InterPro" id="IPR052314">
    <property type="entry name" value="Immune_rcpt_domain"/>
</dbReference>
<dbReference type="PANTHER" id="PTHR16423:SF3">
    <property type="entry name" value="TREM-LIKE TRANSCRIPT 2 PROTEIN"/>
    <property type="match status" value="1"/>
</dbReference>
<dbReference type="PANTHER" id="PTHR16423">
    <property type="entry name" value="TREM-LIKE TRANSCRIPT PROTEIN"/>
    <property type="match status" value="1"/>
</dbReference>
<dbReference type="SUPFAM" id="SSF48726">
    <property type="entry name" value="Immunoglobulin"/>
    <property type="match status" value="1"/>
</dbReference>
<dbReference type="PROSITE" id="PS50835">
    <property type="entry name" value="IG_LIKE"/>
    <property type="match status" value="1"/>
</dbReference>
<evidence type="ECO:0000250" key="1"/>
<evidence type="ECO:0000255" key="2"/>
<evidence type="ECO:0000255" key="3">
    <source>
        <dbReference type="PROSITE-ProRule" id="PRU00114"/>
    </source>
</evidence>
<evidence type="ECO:0000256" key="4">
    <source>
        <dbReference type="SAM" id="MobiDB-lite"/>
    </source>
</evidence>
<evidence type="ECO:0000269" key="5">
    <source>
    </source>
</evidence>
<evidence type="ECO:0000269" key="6">
    <source>
    </source>
</evidence>
<evidence type="ECO:0000269" key="7">
    <source>
    </source>
</evidence>
<evidence type="ECO:0000305" key="8"/>
<protein>
    <recommendedName>
        <fullName>Trem-like transcript 2 protein</fullName>
        <shortName>TLT-2</shortName>
    </recommendedName>
    <alternativeName>
        <fullName>Triggering receptor expressed on myeloid cells-like protein 2</fullName>
    </alternativeName>
</protein>
<proteinExistence type="evidence at protein level"/>
<reference key="1">
    <citation type="journal article" date="2003" name="Eur. J. Immunol.">
        <title>The human TREM gene cluster at 6p21.1 encodes both activating and inhibitory single IgV domain receptors and includes NKp44.</title>
        <authorList>
            <person name="Allcock R.J.N."/>
            <person name="Barrow A.D."/>
            <person name="Forbes S."/>
            <person name="Beck S."/>
            <person name="Trowsdale J."/>
        </authorList>
    </citation>
    <scope>NUCLEOTIDE SEQUENCE [MRNA]</scope>
    <scope>FUNCTION</scope>
    <scope>TISSUE SPECIFICITY</scope>
</reference>
<reference key="2">
    <citation type="journal article" date="2003" name="Genome Res.">
        <title>The secreted protein discovery initiative (SPDI), a large-scale effort to identify novel human secreted and transmembrane proteins: a bioinformatics assessment.</title>
        <authorList>
            <person name="Clark H.F."/>
            <person name="Gurney A.L."/>
            <person name="Abaya E."/>
            <person name="Baker K."/>
            <person name="Baldwin D.T."/>
            <person name="Brush J."/>
            <person name="Chen J."/>
            <person name="Chow B."/>
            <person name="Chui C."/>
            <person name="Crowley C."/>
            <person name="Currell B."/>
            <person name="Deuel B."/>
            <person name="Dowd P."/>
            <person name="Eaton D."/>
            <person name="Foster J.S."/>
            <person name="Grimaldi C."/>
            <person name="Gu Q."/>
            <person name="Hass P.E."/>
            <person name="Heldens S."/>
            <person name="Huang A."/>
            <person name="Kim H.S."/>
            <person name="Klimowski L."/>
            <person name="Jin Y."/>
            <person name="Johnson S."/>
            <person name="Lee J."/>
            <person name="Lewis L."/>
            <person name="Liao D."/>
            <person name="Mark M.R."/>
            <person name="Robbie E."/>
            <person name="Sanchez C."/>
            <person name="Schoenfeld J."/>
            <person name="Seshagiri S."/>
            <person name="Simmons L."/>
            <person name="Singh J."/>
            <person name="Smith V."/>
            <person name="Stinson J."/>
            <person name="Vagts A."/>
            <person name="Vandlen R.L."/>
            <person name="Watanabe C."/>
            <person name="Wieand D."/>
            <person name="Woods K."/>
            <person name="Xie M.-H."/>
            <person name="Yansura D.G."/>
            <person name="Yi S."/>
            <person name="Yu G."/>
            <person name="Yuan J."/>
            <person name="Zhang M."/>
            <person name="Zhang Z."/>
            <person name="Goddard A.D."/>
            <person name="Wood W.I."/>
            <person name="Godowski P.J."/>
            <person name="Gray A.M."/>
        </authorList>
    </citation>
    <scope>NUCLEOTIDE SEQUENCE [LARGE SCALE MRNA]</scope>
</reference>
<reference key="3">
    <citation type="journal article" date="2004" name="Nat. Genet.">
        <title>Complete sequencing and characterization of 21,243 full-length human cDNAs.</title>
        <authorList>
            <person name="Ota T."/>
            <person name="Suzuki Y."/>
            <person name="Nishikawa T."/>
            <person name="Otsuki T."/>
            <person name="Sugiyama T."/>
            <person name="Irie R."/>
            <person name="Wakamatsu A."/>
            <person name="Hayashi K."/>
            <person name="Sato H."/>
            <person name="Nagai K."/>
            <person name="Kimura K."/>
            <person name="Makita H."/>
            <person name="Sekine M."/>
            <person name="Obayashi M."/>
            <person name="Nishi T."/>
            <person name="Shibahara T."/>
            <person name="Tanaka T."/>
            <person name="Ishii S."/>
            <person name="Yamamoto J."/>
            <person name="Saito K."/>
            <person name="Kawai Y."/>
            <person name="Isono Y."/>
            <person name="Nakamura Y."/>
            <person name="Nagahari K."/>
            <person name="Murakami K."/>
            <person name="Yasuda T."/>
            <person name="Iwayanagi T."/>
            <person name="Wagatsuma M."/>
            <person name="Shiratori A."/>
            <person name="Sudo H."/>
            <person name="Hosoiri T."/>
            <person name="Kaku Y."/>
            <person name="Kodaira H."/>
            <person name="Kondo H."/>
            <person name="Sugawara M."/>
            <person name="Takahashi M."/>
            <person name="Kanda K."/>
            <person name="Yokoi T."/>
            <person name="Furuya T."/>
            <person name="Kikkawa E."/>
            <person name="Omura Y."/>
            <person name="Abe K."/>
            <person name="Kamihara K."/>
            <person name="Katsuta N."/>
            <person name="Sato K."/>
            <person name="Tanikawa M."/>
            <person name="Yamazaki M."/>
            <person name="Ninomiya K."/>
            <person name="Ishibashi T."/>
            <person name="Yamashita H."/>
            <person name="Murakawa K."/>
            <person name="Fujimori K."/>
            <person name="Tanai H."/>
            <person name="Kimata M."/>
            <person name="Watanabe M."/>
            <person name="Hiraoka S."/>
            <person name="Chiba Y."/>
            <person name="Ishida S."/>
            <person name="Ono Y."/>
            <person name="Takiguchi S."/>
            <person name="Watanabe S."/>
            <person name="Yosida M."/>
            <person name="Hotuta T."/>
            <person name="Kusano J."/>
            <person name="Kanehori K."/>
            <person name="Takahashi-Fujii A."/>
            <person name="Hara H."/>
            <person name="Tanase T.-O."/>
            <person name="Nomura Y."/>
            <person name="Togiya S."/>
            <person name="Komai F."/>
            <person name="Hara R."/>
            <person name="Takeuchi K."/>
            <person name="Arita M."/>
            <person name="Imose N."/>
            <person name="Musashino K."/>
            <person name="Yuuki H."/>
            <person name="Oshima A."/>
            <person name="Sasaki N."/>
            <person name="Aotsuka S."/>
            <person name="Yoshikawa Y."/>
            <person name="Matsunawa H."/>
            <person name="Ichihara T."/>
            <person name="Shiohata N."/>
            <person name="Sano S."/>
            <person name="Moriya S."/>
            <person name="Momiyama H."/>
            <person name="Satoh N."/>
            <person name="Takami S."/>
            <person name="Terashima Y."/>
            <person name="Suzuki O."/>
            <person name="Nakagawa S."/>
            <person name="Senoh A."/>
            <person name="Mizoguchi H."/>
            <person name="Goto Y."/>
            <person name="Shimizu F."/>
            <person name="Wakebe H."/>
            <person name="Hishigaki H."/>
            <person name="Watanabe T."/>
            <person name="Sugiyama A."/>
            <person name="Takemoto M."/>
            <person name="Kawakami B."/>
            <person name="Yamazaki M."/>
            <person name="Watanabe K."/>
            <person name="Kumagai A."/>
            <person name="Itakura S."/>
            <person name="Fukuzumi Y."/>
            <person name="Fujimori Y."/>
            <person name="Komiyama M."/>
            <person name="Tashiro H."/>
            <person name="Tanigami A."/>
            <person name="Fujiwara T."/>
            <person name="Ono T."/>
            <person name="Yamada K."/>
            <person name="Fujii Y."/>
            <person name="Ozaki K."/>
            <person name="Hirao M."/>
            <person name="Ohmori Y."/>
            <person name="Kawabata A."/>
            <person name="Hikiji T."/>
            <person name="Kobatake N."/>
            <person name="Inagaki H."/>
            <person name="Ikema Y."/>
            <person name="Okamoto S."/>
            <person name="Okitani R."/>
            <person name="Kawakami T."/>
            <person name="Noguchi S."/>
            <person name="Itoh T."/>
            <person name="Shigeta K."/>
            <person name="Senba T."/>
            <person name="Matsumura K."/>
            <person name="Nakajima Y."/>
            <person name="Mizuno T."/>
            <person name="Morinaga M."/>
            <person name="Sasaki M."/>
            <person name="Togashi T."/>
            <person name="Oyama M."/>
            <person name="Hata H."/>
            <person name="Watanabe M."/>
            <person name="Komatsu T."/>
            <person name="Mizushima-Sugano J."/>
            <person name="Satoh T."/>
            <person name="Shirai Y."/>
            <person name="Takahashi Y."/>
            <person name="Nakagawa K."/>
            <person name="Okumura K."/>
            <person name="Nagase T."/>
            <person name="Nomura N."/>
            <person name="Kikuchi H."/>
            <person name="Masuho Y."/>
            <person name="Yamashita R."/>
            <person name="Nakai K."/>
            <person name="Yada T."/>
            <person name="Nakamura Y."/>
            <person name="Ohara O."/>
            <person name="Isogai T."/>
            <person name="Sugano S."/>
        </authorList>
    </citation>
    <scope>NUCLEOTIDE SEQUENCE [LARGE SCALE MRNA]</scope>
    <scope>VARIANT GLY-144</scope>
    <source>
        <tissue>Placenta</tissue>
    </source>
</reference>
<reference key="4">
    <citation type="journal article" date="2003" name="Nature">
        <title>The DNA sequence and analysis of human chromosome 6.</title>
        <authorList>
            <person name="Mungall A.J."/>
            <person name="Palmer S.A."/>
            <person name="Sims S.K."/>
            <person name="Edwards C.A."/>
            <person name="Ashurst J.L."/>
            <person name="Wilming L."/>
            <person name="Jones M.C."/>
            <person name="Horton R."/>
            <person name="Hunt S.E."/>
            <person name="Scott C.E."/>
            <person name="Gilbert J.G.R."/>
            <person name="Clamp M.E."/>
            <person name="Bethel G."/>
            <person name="Milne S."/>
            <person name="Ainscough R."/>
            <person name="Almeida J.P."/>
            <person name="Ambrose K.D."/>
            <person name="Andrews T.D."/>
            <person name="Ashwell R.I.S."/>
            <person name="Babbage A.K."/>
            <person name="Bagguley C.L."/>
            <person name="Bailey J."/>
            <person name="Banerjee R."/>
            <person name="Barker D.J."/>
            <person name="Barlow K.F."/>
            <person name="Bates K."/>
            <person name="Beare D.M."/>
            <person name="Beasley H."/>
            <person name="Beasley O."/>
            <person name="Bird C.P."/>
            <person name="Blakey S.E."/>
            <person name="Bray-Allen S."/>
            <person name="Brook J."/>
            <person name="Brown A.J."/>
            <person name="Brown J.Y."/>
            <person name="Burford D.C."/>
            <person name="Burrill W."/>
            <person name="Burton J."/>
            <person name="Carder C."/>
            <person name="Carter N.P."/>
            <person name="Chapman J.C."/>
            <person name="Clark S.Y."/>
            <person name="Clark G."/>
            <person name="Clee C.M."/>
            <person name="Clegg S."/>
            <person name="Cobley V."/>
            <person name="Collier R.E."/>
            <person name="Collins J.E."/>
            <person name="Colman L.K."/>
            <person name="Corby N.R."/>
            <person name="Coville G.J."/>
            <person name="Culley K.M."/>
            <person name="Dhami P."/>
            <person name="Davies J."/>
            <person name="Dunn M."/>
            <person name="Earthrowl M.E."/>
            <person name="Ellington A.E."/>
            <person name="Evans K.A."/>
            <person name="Faulkner L."/>
            <person name="Francis M.D."/>
            <person name="Frankish A."/>
            <person name="Frankland J."/>
            <person name="French L."/>
            <person name="Garner P."/>
            <person name="Garnett J."/>
            <person name="Ghori M.J."/>
            <person name="Gilby L.M."/>
            <person name="Gillson C.J."/>
            <person name="Glithero R.J."/>
            <person name="Grafham D.V."/>
            <person name="Grant M."/>
            <person name="Gribble S."/>
            <person name="Griffiths C."/>
            <person name="Griffiths M.N.D."/>
            <person name="Hall R."/>
            <person name="Halls K.S."/>
            <person name="Hammond S."/>
            <person name="Harley J.L."/>
            <person name="Hart E.A."/>
            <person name="Heath P.D."/>
            <person name="Heathcott R."/>
            <person name="Holmes S.J."/>
            <person name="Howden P.J."/>
            <person name="Howe K.L."/>
            <person name="Howell G.R."/>
            <person name="Huckle E."/>
            <person name="Humphray S.J."/>
            <person name="Humphries M.D."/>
            <person name="Hunt A.R."/>
            <person name="Johnson C.M."/>
            <person name="Joy A.A."/>
            <person name="Kay M."/>
            <person name="Keenan S.J."/>
            <person name="Kimberley A.M."/>
            <person name="King A."/>
            <person name="Laird G.K."/>
            <person name="Langford C."/>
            <person name="Lawlor S."/>
            <person name="Leongamornlert D.A."/>
            <person name="Leversha M."/>
            <person name="Lloyd C.R."/>
            <person name="Lloyd D.M."/>
            <person name="Loveland J.E."/>
            <person name="Lovell J."/>
            <person name="Martin S."/>
            <person name="Mashreghi-Mohammadi M."/>
            <person name="Maslen G.L."/>
            <person name="Matthews L."/>
            <person name="McCann O.T."/>
            <person name="McLaren S.J."/>
            <person name="McLay K."/>
            <person name="McMurray A."/>
            <person name="Moore M.J.F."/>
            <person name="Mullikin J.C."/>
            <person name="Niblett D."/>
            <person name="Nickerson T."/>
            <person name="Novik K.L."/>
            <person name="Oliver K."/>
            <person name="Overton-Larty E.K."/>
            <person name="Parker A."/>
            <person name="Patel R."/>
            <person name="Pearce A.V."/>
            <person name="Peck A.I."/>
            <person name="Phillimore B.J.C.T."/>
            <person name="Phillips S."/>
            <person name="Plumb R.W."/>
            <person name="Porter K.M."/>
            <person name="Ramsey Y."/>
            <person name="Ranby S.A."/>
            <person name="Rice C.M."/>
            <person name="Ross M.T."/>
            <person name="Searle S.M."/>
            <person name="Sehra H.K."/>
            <person name="Sheridan E."/>
            <person name="Skuce C.D."/>
            <person name="Smith S."/>
            <person name="Smith M."/>
            <person name="Spraggon L."/>
            <person name="Squares S.L."/>
            <person name="Steward C.A."/>
            <person name="Sycamore N."/>
            <person name="Tamlyn-Hall G."/>
            <person name="Tester J."/>
            <person name="Theaker A.J."/>
            <person name="Thomas D.W."/>
            <person name="Thorpe A."/>
            <person name="Tracey A."/>
            <person name="Tromans A."/>
            <person name="Tubby B."/>
            <person name="Wall M."/>
            <person name="Wallis J.M."/>
            <person name="West A.P."/>
            <person name="White S.S."/>
            <person name="Whitehead S.L."/>
            <person name="Whittaker H."/>
            <person name="Wild A."/>
            <person name="Willey D.J."/>
            <person name="Wilmer T.E."/>
            <person name="Wood J.M."/>
            <person name="Wray P.W."/>
            <person name="Wyatt J.C."/>
            <person name="Young L."/>
            <person name="Younger R.M."/>
            <person name="Bentley D.R."/>
            <person name="Coulson A."/>
            <person name="Durbin R.M."/>
            <person name="Hubbard T."/>
            <person name="Sulston J.E."/>
            <person name="Dunham I."/>
            <person name="Rogers J."/>
            <person name="Beck S."/>
        </authorList>
    </citation>
    <scope>NUCLEOTIDE SEQUENCE [LARGE SCALE GENOMIC DNA]</scope>
</reference>
<reference key="5">
    <citation type="journal article" date="2004" name="Genome Res.">
        <title>The status, quality, and expansion of the NIH full-length cDNA project: the Mammalian Gene Collection (MGC).</title>
        <authorList>
            <consortium name="The MGC Project Team"/>
        </authorList>
    </citation>
    <scope>NUCLEOTIDE SEQUENCE [LARGE SCALE MRNA]</scope>
</reference>
<reference key="6">
    <citation type="journal article" date="2008" name="Proc. Natl. Acad. Sci. U.S.A.">
        <title>Triggering receptor expressed on myeloid cell-like transcript 2 (TLT-2) is a counter-receptor for B7-H3 and enhances T cell responses.</title>
        <authorList>
            <person name="Hashiguchi M."/>
            <person name="Kobori H."/>
            <person name="Ritprajak P."/>
            <person name="Kamimura Y."/>
            <person name="Kozono H."/>
            <person name="Azuma M."/>
        </authorList>
    </citation>
    <scope>FUNCTION</scope>
    <scope>INDUCTION</scope>
    <scope>TISSUE SPECIFICITY</scope>
    <scope>INTERACTION WITH CD276</scope>
</reference>
<reference key="7">
    <citation type="journal article" date="2008" name="Proc. Natl. Acad. Sci. U.S.A.">
        <authorList>
            <person name="Hashiguchi M."/>
            <person name="Kobori H."/>
            <person name="Ritprajak P."/>
            <person name="Kamimura Y."/>
            <person name="Kozono H."/>
            <person name="Azuma M."/>
        </authorList>
    </citation>
    <scope>ERRATUM OF PUBMED:18650384</scope>
</reference>